<dbReference type="EC" id="7.1.1.-" evidence="1"/>
<dbReference type="EMBL" id="EU262887">
    <property type="protein sequence ID" value="ABW98759.1"/>
    <property type="molecule type" value="Genomic_DNA"/>
</dbReference>
<dbReference type="RefSeq" id="YP_001687192.1">
    <property type="nucleotide sequence ID" value="NC_010358.2"/>
</dbReference>
<dbReference type="SMR" id="B0Z4T1"/>
<dbReference type="GeneID" id="5951913"/>
<dbReference type="GO" id="GO:0009535">
    <property type="term" value="C:chloroplast thylakoid membrane"/>
    <property type="evidence" value="ECO:0007669"/>
    <property type="project" value="UniProtKB-SubCell"/>
</dbReference>
<dbReference type="GO" id="GO:0051287">
    <property type="term" value="F:NAD binding"/>
    <property type="evidence" value="ECO:0007669"/>
    <property type="project" value="InterPro"/>
</dbReference>
<dbReference type="GO" id="GO:0016655">
    <property type="term" value="F:oxidoreductase activity, acting on NAD(P)H, quinone or similar compound as acceptor"/>
    <property type="evidence" value="ECO:0007669"/>
    <property type="project" value="UniProtKB-UniRule"/>
</dbReference>
<dbReference type="GO" id="GO:0048038">
    <property type="term" value="F:quinone binding"/>
    <property type="evidence" value="ECO:0007669"/>
    <property type="project" value="UniProtKB-KW"/>
</dbReference>
<dbReference type="GO" id="GO:0019684">
    <property type="term" value="P:photosynthesis, light reaction"/>
    <property type="evidence" value="ECO:0007669"/>
    <property type="project" value="UniProtKB-UniRule"/>
</dbReference>
<dbReference type="FunFam" id="1.10.645.10:FF:000003">
    <property type="entry name" value="NAD(P)H-quinone oxidoreductase subunit H, chloroplastic"/>
    <property type="match status" value="1"/>
</dbReference>
<dbReference type="Gene3D" id="1.10.645.10">
    <property type="entry name" value="Cytochrome-c3 Hydrogenase, chain B"/>
    <property type="match status" value="1"/>
</dbReference>
<dbReference type="HAMAP" id="MF_01358">
    <property type="entry name" value="NDH1_NuoD"/>
    <property type="match status" value="1"/>
</dbReference>
<dbReference type="InterPro" id="IPR001135">
    <property type="entry name" value="NADH_Q_OxRdtase_suD"/>
</dbReference>
<dbReference type="InterPro" id="IPR014029">
    <property type="entry name" value="NADH_UbQ_OxRdtase_49kDa_CS"/>
</dbReference>
<dbReference type="InterPro" id="IPR022885">
    <property type="entry name" value="NDH1_su_D/H"/>
</dbReference>
<dbReference type="InterPro" id="IPR029014">
    <property type="entry name" value="NiFe-Hase_large"/>
</dbReference>
<dbReference type="NCBIfam" id="NF004739">
    <property type="entry name" value="PRK06075.1"/>
    <property type="match status" value="1"/>
</dbReference>
<dbReference type="NCBIfam" id="NF005649">
    <property type="entry name" value="PRK07415.1"/>
    <property type="match status" value="1"/>
</dbReference>
<dbReference type="PANTHER" id="PTHR11993:SF10">
    <property type="entry name" value="NADH DEHYDROGENASE [UBIQUINONE] IRON-SULFUR PROTEIN 2, MITOCHONDRIAL"/>
    <property type="match status" value="1"/>
</dbReference>
<dbReference type="PANTHER" id="PTHR11993">
    <property type="entry name" value="NADH-UBIQUINONE OXIDOREDUCTASE 49 KDA SUBUNIT"/>
    <property type="match status" value="1"/>
</dbReference>
<dbReference type="Pfam" id="PF00346">
    <property type="entry name" value="Complex1_49kDa"/>
    <property type="match status" value="1"/>
</dbReference>
<dbReference type="SUPFAM" id="SSF56762">
    <property type="entry name" value="HydB/Nqo4-like"/>
    <property type="match status" value="1"/>
</dbReference>
<dbReference type="PROSITE" id="PS00535">
    <property type="entry name" value="COMPLEX1_49K"/>
    <property type="match status" value="1"/>
</dbReference>
<feature type="chain" id="PRO_0000358012" description="NAD(P)H-quinone oxidoreductase subunit H, chloroplastic">
    <location>
        <begin position="1"/>
        <end position="393"/>
    </location>
</feature>
<gene>
    <name evidence="1" type="primary">ndhH</name>
</gene>
<evidence type="ECO:0000255" key="1">
    <source>
        <dbReference type="HAMAP-Rule" id="MF_01358"/>
    </source>
</evidence>
<protein>
    <recommendedName>
        <fullName evidence="1">NAD(P)H-quinone oxidoreductase subunit H, chloroplastic</fullName>
        <ecNumber evidence="1">7.1.1.-</ecNumber>
    </recommendedName>
    <alternativeName>
        <fullName>NAD(P)H dehydrogenase subunit H</fullName>
    </alternativeName>
    <alternativeName>
        <fullName evidence="1">NADH-plastoquinone oxidoreductase 49 kDa subunit</fullName>
    </alternativeName>
    <alternativeName>
        <fullName evidence="1">NADH-plastoquinone oxidoreductase subunit H</fullName>
    </alternativeName>
</protein>
<comment type="function">
    <text evidence="1">NDH shuttles electrons from NAD(P)H:plastoquinone, via FMN and iron-sulfur (Fe-S) centers, to quinones in the photosynthetic chain and possibly in a chloroplast respiratory chain. The immediate electron acceptor for the enzyme in this species is believed to be plastoquinone. Couples the redox reaction to proton translocation, and thus conserves the redox energy in a proton gradient.</text>
</comment>
<comment type="catalytic activity">
    <reaction evidence="1">
        <text>a plastoquinone + NADH + (n+1) H(+)(in) = a plastoquinol + NAD(+) + n H(+)(out)</text>
        <dbReference type="Rhea" id="RHEA:42608"/>
        <dbReference type="Rhea" id="RHEA-COMP:9561"/>
        <dbReference type="Rhea" id="RHEA-COMP:9562"/>
        <dbReference type="ChEBI" id="CHEBI:15378"/>
        <dbReference type="ChEBI" id="CHEBI:17757"/>
        <dbReference type="ChEBI" id="CHEBI:57540"/>
        <dbReference type="ChEBI" id="CHEBI:57945"/>
        <dbReference type="ChEBI" id="CHEBI:62192"/>
    </reaction>
</comment>
<comment type="catalytic activity">
    <reaction evidence="1">
        <text>a plastoquinone + NADPH + (n+1) H(+)(in) = a plastoquinol + NADP(+) + n H(+)(out)</text>
        <dbReference type="Rhea" id="RHEA:42612"/>
        <dbReference type="Rhea" id="RHEA-COMP:9561"/>
        <dbReference type="Rhea" id="RHEA-COMP:9562"/>
        <dbReference type="ChEBI" id="CHEBI:15378"/>
        <dbReference type="ChEBI" id="CHEBI:17757"/>
        <dbReference type="ChEBI" id="CHEBI:57783"/>
        <dbReference type="ChEBI" id="CHEBI:58349"/>
        <dbReference type="ChEBI" id="CHEBI:62192"/>
    </reaction>
</comment>
<comment type="subunit">
    <text evidence="1">NDH is composed of at least 16 different subunits, 5 of which are encoded in the nucleus.</text>
</comment>
<comment type="subcellular location">
    <subcellularLocation>
        <location evidence="1">Plastid</location>
        <location evidence="1">Chloroplast thylakoid membrane</location>
        <topology evidence="1">Peripheral membrane protein</topology>
        <orientation evidence="1">Stromal side</orientation>
    </subcellularLocation>
</comment>
<comment type="similarity">
    <text evidence="1">Belongs to the complex I 49 kDa subunit family.</text>
</comment>
<reference key="1">
    <citation type="journal article" date="2008" name="Nucleic Acids Res.">
        <title>The complete nucleotide sequences of the five genetically distinct plastid genomes of Oenothera, subsection Oenothera: I. Sequence evaluation and plastome evolution.</title>
        <authorList>
            <person name="Greiner S."/>
            <person name="Wang X."/>
            <person name="Rauwolf U."/>
            <person name="Silber M.V."/>
            <person name="Mayer K."/>
            <person name="Meurer J."/>
            <person name="Haberer G."/>
            <person name="Herrmann R.G."/>
        </authorList>
    </citation>
    <scope>NUCLEOTIDE SEQUENCE [LARGE SCALE GENOMIC DNA]</scope>
    <source>
        <strain>cv. Douthat 1</strain>
    </source>
</reference>
<name>NDHH_OENAR</name>
<accession>B0Z4T1</accession>
<organism>
    <name type="scientific">Oenothera argillicola</name>
    <name type="common">Appalachian evening primrose</name>
    <dbReference type="NCBI Taxonomy" id="3940"/>
    <lineage>
        <taxon>Eukaryota</taxon>
        <taxon>Viridiplantae</taxon>
        <taxon>Streptophyta</taxon>
        <taxon>Embryophyta</taxon>
        <taxon>Tracheophyta</taxon>
        <taxon>Spermatophyta</taxon>
        <taxon>Magnoliopsida</taxon>
        <taxon>eudicotyledons</taxon>
        <taxon>Gunneridae</taxon>
        <taxon>Pentapetalae</taxon>
        <taxon>rosids</taxon>
        <taxon>malvids</taxon>
        <taxon>Myrtales</taxon>
        <taxon>Onagraceae</taxon>
        <taxon>Onagroideae</taxon>
        <taxon>Onagreae</taxon>
        <taxon>Oenothera</taxon>
    </lineage>
</organism>
<geneLocation type="chloroplast"/>
<keyword id="KW-0150">Chloroplast</keyword>
<keyword id="KW-0472">Membrane</keyword>
<keyword id="KW-0520">NAD</keyword>
<keyword id="KW-0521">NADP</keyword>
<keyword id="KW-0934">Plastid</keyword>
<keyword id="KW-0618">Plastoquinone</keyword>
<keyword id="KW-0874">Quinone</keyword>
<keyword id="KW-0793">Thylakoid</keyword>
<keyword id="KW-1278">Translocase</keyword>
<keyword id="KW-0813">Transport</keyword>
<sequence length="393" mass="45437">MNVTTTRKDLMIVNMGPHHPSMHGVLRLILTLDGEDVIDCEPILGYLHRGMEKIAENRTVIQYLPYVTRWDYLATMFTEAITINGPEQLGNIQVPKRASYIRIIMLELSRIASHLLWLGPFMADIGAQTPFFYIFRERELVYDLFEAATGMRMMHNYFRIGGVAADLPYGWIDKCLDFCDYFLTAVSEYQKLITRNPIFLERVEGVGIIGGEEAINWGLSGPMLRASGIEWDLRKVDRYECYGELDWEIRWQKEGDSLARYLVRMSEMTESIKIIQQALEGIPGGPYENLEIRCFDIEKDPEWDGFEYRFISKKPSPTFELPKQELYVRVEAPKGELGIFLIGDQSGFPWRWKIRPPGFINLQILPQLVKRMKLADIMTILGSIDIIMGEVDR</sequence>
<proteinExistence type="inferred from homology"/>